<sequence length="4144" mass="473061">MFSSSQIPRVFLIPSRRELRLVLQLQESLSAGDRCSAAMASYQLTRGLGQECVLSSDPAVLALQTSLVFSKDFGLLVFVRKSLSIDEFRDCREEVLKFLYIFLEKIGQKITPYSLDIKTTCTSVYTKDKAAKCKIPALDLLIKLLQTLRSSRLMDEFSIGELFNKFYGELALKTKIQDTVLEKIYELLGVLAEVHPSEMINNSEKLFRAFLGELKIQMTSAIREPKLPVLAGCLKGLSSLMCNFTKSMEEDPQTSREIFDFALKAIRPQIDLKRYAVPLAGLCLFTLHASQFSTCLLDNYVSLFEVLSKWCSHTNVEMKKAAHSALESFLKQVSFMVAKDAEMHKSKLQYFMEQFYGIIRNMDSNSKDLSIAIRGYGLFAGPCKVINAKDVDFMYIELIQRCKQLFLTQIDTVDDHVYHMPSFLQSIASVLLYLDRVPEVYTPVLEHLMVAQIDSFPQYSPKMQSVCCKALVKVFLALGGKGPVLWNCISTVVHQGLIRICSKPVILQKGVESEPEEYRASGEVRTGKWKVPTYKDYLDLFRSLLSCDQMMDSLLADEAFLFVNSSLQNLNRLLYDEFVKSVLKIIEKLDLTLEKRNVGEHEDENEATGVWVIPTSDPAANLHPAKPKDFSAFINLVEFCRDILPEKHIEFFEPWVYSFAYELILQSTRLPLISGFYKLLSVAVRNAKKIKYFEGVGMKSQTQAPKDPEKYSCFALFAKFGKEVTVKMKQYKDELLASCLTFILSLPHDIIELDIRAYIPALQMAFKLGLSYTPLAEVGLNALEEWSVCICKHIIQPHYKDILPSLDGYLKTSALSDETKNSWEVSAPSQAAQKGFNQVVLKHLKKTKNISSNEALSLEEIRIRVVQMLGFLGGQINKNLLTATSSDEMMKKCVAWDREKRLSFAVPFIEMKPVIYLDVFLPRVTELALSASDRQTKVAACELLHSMVMFTLGKATQMPECGQGFPPMYQLYKRTFPALLRLACDVDQVTRQLYEPLVMQLIHWFTNNKKFESQDTVALLETILDGIVDPVDSTLRDFCGRCIREFLKWSIKQTTPQQQEKSPVNTKSLFKRLYSFALHPNAFKRLGASLAFNNIYREFREEESLVEQFVFEALVTYLESLALAHTDEKPLGTIRQCCDAIDHLRHIIEKKHVSLNKVKKRRRPRGFPPSASLCLLDMVQWLLAHCGRPQTECRHKSIELFYKFVPLLPGNKSPSLWLKDILKNKDTSFLINTFEGGGGSCDRPSGILVQPTLFHLQGPFSLRAALQWMDMLLAALECYNTFIEEKTLKAPDVLGTETQSSLWKAVAFFLDNIAMHDITAAEKCFGTGAAGHRPSPQEGERYNYSKCTIVVRIMEFTTTLLNTSPDGWKLLEEDLCNNKNFMTLLVKILCQPSSIGFNIGDVLVMNHLPDVCVNLMKALKKSPYKDTLEMCLKEKITVQSIEELCAVDLYGPDAYVDRATLASVVSACKQLHRAGVLHVVLPSQSADQRHSVGIKLLFLVYKSIAPGDEREYFPSLDPSCKRLASGLLELAFAFGGLCEHLVDLLLDTAVLSMPASGESQRNMVSFSHGEYFYSLFSEIINTELLRNLDMTVLKLMKSSVDNPKMVSAILNGMLDQSFRDRASRKQQGLKLASTILHNWKKWDSWWAKDSAPESKTAVLTLLAKILQIDSSVSFNTNHSAFPEVFTTYTSLLADSNLGLHLMGQAVILLPFFTNLTGGNLEDLEHVLEKLIVSNFPMKSEEFPVGTLRYSNYVDCMKKFLDALELSQSPVLLQLMAEILCREQQHVMEELFQSTFKKIARKSSCVTQLALLESVYRMFKRDDLLSNVTRQAFVDRSLLTLLWHCGLNALREFFGKIVVETIDVLKSRFTKLNESTFDTQITKKMGFYKMLDVMYSRLSKDDVHSKESKINQVFHGSCITEGNELTKTLIKLCYDAFTENMAGENQLLERRRLYHCAAYNCAISVICCVFTELKFYQGFLFSEKPEKNLLILENLIDLKRCYTFPIEVEVPMERRKKYIEIRKEAREAVNGDSDGPHYLSSLSYLADSSLSEEMSQFDFSTGVQSYSYGSQDPKSTHGHFRRREHKDPMVQDAVLELEMDELNQHECMATMTALIKHMQRNQILSKDEGSVPRNLPPWMKFLHDKLGNPSVSLNIRLFLAKLVINTEEVFRPYAKYWLSPLLQLVVSENNGGEGIHYMVVEIVVTVLSWTGLATPVGVPKDEVLANRLLHFLMEHVFHQKRAVFRHNLEIIKTLVECWKDCLSVPYRLIFEKFSSKDPNSKDNSVGIQLLGIVMANNLPPYDPKCGIERIKYFEALVSNMSFVKYKEVYAAAAEVLGLTLRYITERENILENVVYELVIKQLKQHQNTMEDKFIVCLNKVVKNFPPLADRFMNAVFFLLPKFHGVMKTLCLEVVLCRAEEITNIYLELKSKDFIQVMRHRDDERQKVCLDIIYKMMAKLKPVELRDLLNSVVEFISHPSPVCREQMYNILMWIHDNYRDPESQADDDSREVFKLAKDVLIQGLIDENAGLQLIIRNFWSHETRLPSNTLDRLLALNSLYSPKIEVHFLSLATDFLLEMTSLSPDYANPVFEHPLSECEFQEYTIDSDWRFRSTVLTPMFIETQASQSTLQTRTQERSLPAQGVMARQIRATQQQYDFTPTQTADGRSSFNWLTGSSIDPLVDYTVSSSDSSSSSLLFAQKRNEKSQRAPLKSVGPDFGEKKLGLPGDKVDNKAKGIDNRTEILRLRRRFIKDQEKLSLIYARKGIAEQKREKEIKSELKMKHDAQVILYRSYRQGDLPDIQIKYSSLVTPLQAVAQRDPVVAKQLFGSLFSGIIKEMDKYKTMSEKNNITQKLLQDFSHFLNSTFSFFPPFVSCIQEISCQHTDLLSLDPGSIRASCLASLQQPVGVRLLEEALLHLGPQEPPAKQFKGRMRVSPDVVRWMELAKLYRSIGEYDILRGIFSSEIGTKQITQSAIFAEARSDYSEAAKQYNEALNKEEWVDGEPTEAEKDFWELASLDCYNQLAEWKSLAYCSIVSVDNENPPDLNKMWSEPFYRETYLPYMIRSKLKLLLQGEADQSLLTFIDEAVNKDLQKALIELHYSQELSLLYILQDDIDRAKYYIENCIQIFMQNYSSIDVLLHRSRLTKLQSVQTMIEIQEFISFISRQGNLSSQAPLKRLLKSWTNRYPDARMDPVHIWDDIITNRCFFLSKIEEKLTLPLGDHSLSMDEERDSSDKMEVQEQGEEVCSLIKNCMFSMKMKMVESARKQHNFSLAMKLLKELRRESKTRDDWQVKWVHTYCRLSHSRIQGQSCLQQILSALKTVSLLAGESTSSYFSKNVLAFHDQNILLGTTYSIIANALRREPACLAEIEESRARRILDLSGSSLENAEKVIAVLYQRAFHHLSEAVRTAEEEAQPSLRGQGPVASLTDAYMTLADFCDQQLRKEEESASVTESVELQTYPGLVVDNMLKALKLHSSEARLKFPRLLQIIELYPEETLSLMTKEISSTPCWQFIGWISHMVALLDQEEAVAVQCTVEEIADNYPQAIVYPFIISSESYSFKDTSTGHKNKEFVARIKTKLDLGGVIQDFISALEQLSNPEMLFKDWTDDMKAELAKNPVSKKNIEKMYERMYAALGDLRAPGLGAFRRRFIQVFGKEFDKHFGKGGSKLPGMKLRDFGSITDSLFYKMCTDSKPPGNLKECSPWMSDFKVEFLRNELEIPGQYDGKGKPLPEYHARIAGFDERIKVMASIRKPKRIIIRGRDEKEYPLLVKGGEDLRQDQRIEQLFEVMNVLLSQDTACSQRNMQLKTYHVIPMTSRLGLIEWIENTLTLKDFLLSNMSREEKAAYTSDPKAPPCEYRDWLAKMSGKYDVGAYMSMFKAASRTETVTSFRRRESRVPADLLKRAFLKMSTGPAAFLALRSHFASSHALMCISHWILGIGDRHLNNFMVSMETGGLIGIDFGHAFGSATQFLPVPELMPFRLTRQFINLMLPMKEAGVVYSIMVHALRAFRSHSDLLTNTMDVFVKEPSFDWKNFEQKMLKKGGSWIQEINVTEKNWYPRQKIHYAKRKLAGANPAVITCDELFLGHEKALAFGDYVAVARGSKDHNIRAQQPENGLSEEAQVKCLIDQATDPNILGRTWIGWEPWM</sequence>
<protein>
    <recommendedName>
        <fullName>DNA-dependent protein kinase catalytic subunit</fullName>
        <shortName>DNA-PK catalytic subunit</shortName>
        <shortName>DNA-PKcs</shortName>
        <ecNumber evidence="1">2.7.11.1</ecNumber>
    </recommendedName>
</protein>
<gene>
    <name type="primary">PRKDC</name>
</gene>
<accession>Q8WN22</accession>
<name>PRKDC_CANLF</name>
<feature type="chain" id="PRO_0000225632" description="DNA-dependent protein kinase catalytic subunit">
    <location>
        <begin position="1"/>
        <end position="4144"/>
    </location>
</feature>
<feature type="repeat" description="HEAT 1">
    <location>
        <begin position="298"/>
        <end position="333"/>
    </location>
</feature>
<feature type="repeat" description="HEAT 2">
    <location>
        <begin position="1014"/>
        <end position="1050"/>
    </location>
</feature>
<feature type="repeat" description="TPR 1">
    <location>
        <begin position="1736"/>
        <end position="1769"/>
    </location>
</feature>
<feature type="repeat" description="TPR 2">
    <location>
        <begin position="2903"/>
        <end position="2935"/>
    </location>
</feature>
<feature type="domain" description="FAT" evidence="4">
    <location>
        <begin position="2922"/>
        <end position="3555"/>
    </location>
</feature>
<feature type="repeat" description="TPR 3">
    <location>
        <begin position="2936"/>
        <end position="2964"/>
    </location>
</feature>
<feature type="repeat" description="TPR 4">
    <location>
        <begin position="2965"/>
        <end position="2998"/>
    </location>
</feature>
<feature type="repeat" description="TPR 5">
    <location>
        <begin position="3711"/>
        <end position="3748"/>
    </location>
</feature>
<feature type="domain" description="PI3K/PI4K catalytic" evidence="3">
    <location>
        <begin position="3738"/>
        <end position="4069"/>
    </location>
</feature>
<feature type="domain" description="FATC" evidence="4 5">
    <location>
        <begin position="4112"/>
        <end position="4144"/>
    </location>
</feature>
<feature type="region of interest" description="Interaction with C1D" evidence="1">
    <location>
        <begin position="1516"/>
        <end position="1551"/>
    </location>
</feature>
<feature type="region of interest" description="Leucine-zipper">
    <location>
        <begin position="1516"/>
        <end position="1551"/>
    </location>
</feature>
<feature type="region of interest" description="KIP-binding" evidence="1">
    <location>
        <begin position="2448"/>
        <end position="3228"/>
    </location>
</feature>
<feature type="region of interest" description="Disordered" evidence="6">
    <location>
        <begin position="2697"/>
        <end position="2729"/>
    </location>
</feature>
<feature type="region of interest" description="May split the end of the DNA molecule, with the two strands separating around the region" evidence="1">
    <location>
        <begin position="2753"/>
        <end position="2781"/>
    </location>
</feature>
<feature type="region of interest" description="G-loop" evidence="3">
    <location>
        <begin position="3744"/>
        <end position="3750"/>
    </location>
</feature>
<feature type="region of interest" description="Catalytic loop" evidence="3">
    <location>
        <begin position="3935"/>
        <end position="3943"/>
    </location>
</feature>
<feature type="region of interest" description="Activation loop" evidence="3">
    <location>
        <begin position="3955"/>
        <end position="3980"/>
    </location>
</feature>
<feature type="compositionally biased region" description="Basic and acidic residues" evidence="6">
    <location>
        <begin position="2716"/>
        <end position="2729"/>
    </location>
</feature>
<feature type="site" description="Cleavage; by caspase-3" evidence="1">
    <location>
        <begin position="2033"/>
        <end position="2034"/>
    </location>
</feature>
<feature type="modified residue" description="N6-acetyllysine" evidence="1">
    <location>
        <position position="127"/>
    </location>
</feature>
<feature type="modified residue" description="Phosphoserine" evidence="1">
    <location>
        <position position="521"/>
    </location>
</feature>
<feature type="modified residue" description="Phosphoserine" evidence="1">
    <location>
        <position position="851"/>
    </location>
</feature>
<feature type="modified residue" description="Phosphoserine" evidence="1">
    <location>
        <position position="903"/>
    </location>
</feature>
<feature type="modified residue" description="Phosphoserine" evidence="1">
    <location>
        <position position="1075"/>
    </location>
</feature>
<feature type="modified residue" description="N6-acetyllysine" evidence="1">
    <location>
        <position position="1219"/>
    </location>
</feature>
<feature type="modified residue" description="N6-acetyllysine" evidence="1">
    <location>
        <position position="1983"/>
    </location>
</feature>
<feature type="modified residue" description="Phosphoserine; by autocatalysis" evidence="1">
    <location>
        <position position="2069"/>
    </location>
</feature>
<feature type="modified residue" description="N6-acetyllysine" evidence="1">
    <location>
        <position position="2271"/>
    </location>
</feature>
<feature type="modified residue" description="Phosphothreonine" evidence="1">
    <location>
        <position position="2547"/>
    </location>
</feature>
<feature type="modified residue" description="Phosphothreonine; by autocatalysis" evidence="1">
    <location>
        <position position="2621"/>
    </location>
</feature>
<feature type="modified residue" description="Phosphoserine; by autocatalysis" evidence="1">
    <location>
        <position position="2624"/>
    </location>
</feature>
<feature type="modified residue" description="Phosphothreonine; by autocatalysis" evidence="1">
    <location>
        <position position="2650"/>
    </location>
</feature>
<feature type="modified residue" description="Phosphothreonine; by autocatalysis" evidence="1">
    <location>
        <position position="2659"/>
    </location>
</feature>
<feature type="modified residue" description="Phosphoserine" evidence="1">
    <location>
        <position position="2805"/>
    </location>
</feature>
<feature type="modified residue" description="Phosphoserine" evidence="1">
    <location>
        <position position="3221"/>
    </location>
</feature>
<feature type="modified residue" description="N6-acetyllysine" evidence="1">
    <location>
        <position position="3257"/>
    </location>
</feature>
<feature type="modified residue" description="N6-acetyllysine" evidence="1">
    <location>
        <position position="3276"/>
    </location>
</feature>
<feature type="modified residue" description="N6-acetyllysine" evidence="1">
    <location>
        <position position="3654"/>
    </location>
</feature>
<feature type="modified residue" description="N6-acetyllysine" evidence="1">
    <location>
        <position position="3658"/>
    </location>
</feature>
<feature type="modified residue" description="Phosphoserine" evidence="1">
    <location>
        <position position="3747"/>
    </location>
</feature>
<feature type="modified residue" description="Phosphoserine" evidence="1">
    <location>
        <position position="3837"/>
    </location>
</feature>
<feature type="modified residue" description="Phosphoserine" evidence="1">
    <location>
        <position position="4042"/>
    </location>
</feature>
<keyword id="KW-0007">Acetylation</keyword>
<keyword id="KW-0067">ATP-binding</keyword>
<keyword id="KW-0090">Biological rhythms</keyword>
<keyword id="KW-0963">Cytoplasm</keyword>
<keyword id="KW-0227">DNA damage</keyword>
<keyword id="KW-0233">DNA recombination</keyword>
<keyword id="KW-0234">DNA repair</keyword>
<keyword id="KW-0238">DNA-binding</keyword>
<keyword id="KW-0391">Immunity</keyword>
<keyword id="KW-0399">Innate immunity</keyword>
<keyword id="KW-0418">Kinase</keyword>
<keyword id="KW-0547">Nucleotide-binding</keyword>
<keyword id="KW-0539">Nucleus</keyword>
<keyword id="KW-0597">Phosphoprotein</keyword>
<keyword id="KW-1185">Reference proteome</keyword>
<keyword id="KW-0677">Repeat</keyword>
<keyword id="KW-0690">Ribosome biogenesis</keyword>
<keyword id="KW-0705">SCID</keyword>
<keyword id="KW-0723">Serine/threonine-protein kinase</keyword>
<keyword id="KW-0802">TPR repeat</keyword>
<keyword id="KW-0808">Transferase</keyword>
<keyword id="KW-0832">Ubl conjugation</keyword>
<comment type="function">
    <text evidence="1 2">Serine/threonine-protein kinase that acts as a molecular sensor for DNA damage. Involved in DNA non-homologous end joining (NHEJ) required for double-strand break (DSB) repair and V(D)J recombination. Must be bound to DNA to express its catalytic properties. Promotes processing of hairpin DNA structures in V(D)J recombination by activation of the hairpin endonuclease artemis (DCLRE1C). Recruited by XRCC5 and XRCC6 to DNA ends and is required to (1) protect and align broken ends of DNA, thereby preventing their degradation, (2) and sequester the DSB for repair by NHEJ. Acts as a scaffold protein to aid the localization of DNA repair proteins to the site of damage. The assembly of the DNA-PK complex at DNA ends is also required for the NHEJ ligation step. Found at the ends of chromosomes, suggesting a further role in the maintenance of telomeric stability and the prevention of chromosomal end fusion. Also involved in modulation of transcription. As part of the DNA-PK complex, involved in the early steps of ribosome assembly by promoting the processing of precursor rRNA into mature 18S rRNA in the small-subunit processome. Binding to U3 small nucleolar RNA, recruits PRKDC and XRCC5/Ku86 to the small-subunit processome. Recognizes the substrate consensus sequence [ST]-Q. Phosphorylates 'Ser-139' of histone variant H2AX, thereby regulating DNA damage response mechanism. Phosphorylates ASF1A, DCLRE1C, c-Abl/ABL1, histone H1, HSPCA, c-jun/JUN, p53/TP53, PARP1, POU2F1, DHX9, FH, SRF, NHEJ1/XLF, XRCC1, XRCC4, XRCC5, XRCC6, WRN, MYC and RFA2. Can phosphorylate C1D not only in the presence of linear DNA but also in the presence of supercoiled DNA. Ability to phosphorylate p53/TP53 in the presence of supercoiled DNA is dependent on C1D (By similarity). Acts as a regulator of the phosphatidylinositol 3-kinase/protein kinase B signal transduction by mediating phosphorylation of 'Ser-473' of protein kinase B (PKB/AKT1, PKB/AKT2, PKB/AKT3), promoting their activation (By similarity). Contributes to the determination of the circadian period length by antagonizing phosphorylation of CRY1 'Ser-588' and increasing CRY1 protein stability, most likely through an indirect mechanism (By similarity). Plays a role in the regulation of DNA virus-mediated innate immune response by assembling into the HDP-RNP complex, a complex that serves as a platform for IRF3 phosphorylation and subsequent innate immune response activation through the cGAS-STING pathway (By similarity). Also regulates the cGAS-STING pathway by catalyzing phosphorylation of CGAS, thereby impairing CGAS oligomerization and activation (By similarity). Also regulates the cGAS-STING pathway by mediating phosphorylation of PARP1 (By similarity).</text>
</comment>
<comment type="catalytic activity">
    <reaction evidence="1">
        <text>L-seryl-[protein] + ATP = O-phospho-L-seryl-[protein] + ADP + H(+)</text>
        <dbReference type="Rhea" id="RHEA:17989"/>
        <dbReference type="Rhea" id="RHEA-COMP:9863"/>
        <dbReference type="Rhea" id="RHEA-COMP:11604"/>
        <dbReference type="ChEBI" id="CHEBI:15378"/>
        <dbReference type="ChEBI" id="CHEBI:29999"/>
        <dbReference type="ChEBI" id="CHEBI:30616"/>
        <dbReference type="ChEBI" id="CHEBI:83421"/>
        <dbReference type="ChEBI" id="CHEBI:456216"/>
        <dbReference type="EC" id="2.7.11.1"/>
    </reaction>
</comment>
<comment type="catalytic activity">
    <reaction evidence="1">
        <text>L-threonyl-[protein] + ATP = O-phospho-L-threonyl-[protein] + ADP + H(+)</text>
        <dbReference type="Rhea" id="RHEA:46608"/>
        <dbReference type="Rhea" id="RHEA-COMP:11060"/>
        <dbReference type="Rhea" id="RHEA-COMP:11605"/>
        <dbReference type="ChEBI" id="CHEBI:15378"/>
        <dbReference type="ChEBI" id="CHEBI:30013"/>
        <dbReference type="ChEBI" id="CHEBI:30616"/>
        <dbReference type="ChEBI" id="CHEBI:61977"/>
        <dbReference type="ChEBI" id="CHEBI:456216"/>
        <dbReference type="EC" id="2.7.11.1"/>
    </reaction>
</comment>
<comment type="activity regulation">
    <text evidence="1">Activity seems to be attenuated by autophosphorylation. Binding to the SL1 region of U3 small nucleolar RNA promotes auto-phosphorylation activity. Inhibited by wortmannin.</text>
</comment>
<comment type="subunit">
    <text evidence="1">DNA-PK is a heterotrimer of PRKDC and the Ku dimer (composed of XRCC6/Ku70 and XRCC5/Ku86). Formation of this complex may be promoted by interaction with ILF3. Component of the core long-range non-homologous end joining (NHEJ) complex (also named DNA-PK complex) composed of PRKDC, LIG4, XRCC4, XRCC6/Ku70, XRCC5/Ku86 and NHEJ1/XLF. Additional component of the NHEJ complex includes PAXX. Following autophosphorylation, PRKDC dissociates from DNA. Interacts with DNA-PKcs-interacting protein (KIP) with the region upstream the kinase domain. PRKDC alone also interacts with and phosphorylates DCLRE1C, thereby activating the latent endonuclease activity of this protein. Interacts with C1D. Interacts with TTI1 and TELO2. Interacts with CIB1. Interacts with SETX. Interacts with NR4A3; the DNA-dependent protein kinase complex DNA-PK phosphorylates and activates NR4A3 and prevents NR4A3 ubiquitination and degradation. Interacts with BRAT1. Part of the HDP-RNP complex composed of at least HEXIM1, PRKDC, XRCC5, XRCC6, paraspeckle proteins (SFPQ, NONO, PSPC1, RBM14, and MATR3) and NEAT1 RNA. Interacts with KAT5.</text>
</comment>
<comment type="subcellular location">
    <subcellularLocation>
        <location evidence="1">Nucleus</location>
    </subcellularLocation>
    <subcellularLocation>
        <location evidence="1">Nucleus</location>
        <location evidence="1">Nucleolus</location>
    </subcellularLocation>
    <subcellularLocation>
        <location evidence="1">Cytoplasm</location>
        <location evidence="1">Cytosol</location>
    </subcellularLocation>
</comment>
<comment type="PTM">
    <text evidence="1 2">Autophosphorylated at two clusters, the T2609 cluster and the S2056 cluster. Autophosphorylated on Ser-2069, Thr-2621, Thr-2650 and Thr-2659. Ser-2069 and Thr-2621 are DNA damage-inducible phosphorylation sites (inducible with ionizing radiation, IR) dephosphorylated by PPP5C (By similarity). Autophosphorylation induces a conformational change that leads to remodeling of the DNA-PK complex, requisite for efficient end processing and DNA repair (By similarity). Autophosphorylation in trans within DNA-PK complexes loaded on DNA ends leads to the dissociation of PRKDC from DNA and the transition into the short-range NHEJ complex (By similarity). Autophosphorylation of the T2609 cluster is required for hematopoietic development and protein synthesis in erythrocytes precursors (By similarity).</text>
</comment>
<comment type="PTM">
    <text evidence="2">S-nitrosylated by GAPDH.</text>
</comment>
<comment type="PTM">
    <text evidence="1">Polyubiquitinated by RNF144A, leading to proteasomal degradation.</text>
</comment>
<comment type="disease">
    <text evidence="7">Defects in PRKDC are the cause of severe combined immune deficiency (SCID) which is characterized by a lack of mature functional lymphocytes and a high susceptibility to lethal opportunistic infections if not chronically treated with antibiotics. The lack of B- and T-cell immunity resembles severe combined immunodeficiency syndrome in human infants.</text>
</comment>
<comment type="similarity">
    <text evidence="8">Belongs to the PI3/PI4-kinase family.</text>
</comment>
<dbReference type="EC" id="2.7.11.1" evidence="1"/>
<dbReference type="EMBL" id="AF448227">
    <property type="protein sequence ID" value="AAL40979.1"/>
    <property type="molecule type" value="mRNA"/>
</dbReference>
<dbReference type="SMR" id="Q8WN22"/>
<dbReference type="FunCoup" id="Q8WN22">
    <property type="interactions" value="2005"/>
</dbReference>
<dbReference type="STRING" id="9615.ENSCAFP00000009842"/>
<dbReference type="PaxDb" id="9612-ENSCAFP00000009842"/>
<dbReference type="eggNOG" id="KOG0891">
    <property type="taxonomic scope" value="Eukaryota"/>
</dbReference>
<dbReference type="InParanoid" id="Q8WN22"/>
<dbReference type="OrthoDB" id="431717at2759"/>
<dbReference type="Proteomes" id="UP000002254">
    <property type="component" value="Unplaced"/>
</dbReference>
<dbReference type="Proteomes" id="UP000694429">
    <property type="component" value="Unplaced"/>
</dbReference>
<dbReference type="Proteomes" id="UP000694542">
    <property type="component" value="Unplaced"/>
</dbReference>
<dbReference type="Proteomes" id="UP000805418">
    <property type="component" value="Unplaced"/>
</dbReference>
<dbReference type="GO" id="GO:0005829">
    <property type="term" value="C:cytosol"/>
    <property type="evidence" value="ECO:0007669"/>
    <property type="project" value="UniProtKB-SubCell"/>
</dbReference>
<dbReference type="GO" id="GO:0005958">
    <property type="term" value="C:DNA-dependent protein kinase-DNA ligase 4 complex"/>
    <property type="evidence" value="ECO:0000250"/>
    <property type="project" value="UniProtKB"/>
</dbReference>
<dbReference type="GO" id="GO:0070419">
    <property type="term" value="C:nonhomologous end joining complex"/>
    <property type="evidence" value="ECO:0000250"/>
    <property type="project" value="UniProtKB"/>
</dbReference>
<dbReference type="GO" id="GO:0005730">
    <property type="term" value="C:nucleolus"/>
    <property type="evidence" value="ECO:0007669"/>
    <property type="project" value="UniProtKB-SubCell"/>
</dbReference>
<dbReference type="GO" id="GO:0005634">
    <property type="term" value="C:nucleus"/>
    <property type="evidence" value="ECO:0000318"/>
    <property type="project" value="GO_Central"/>
</dbReference>
<dbReference type="GO" id="GO:0032040">
    <property type="term" value="C:small-subunit processome"/>
    <property type="evidence" value="ECO:0000250"/>
    <property type="project" value="UniProtKB"/>
</dbReference>
<dbReference type="GO" id="GO:0005524">
    <property type="term" value="F:ATP binding"/>
    <property type="evidence" value="ECO:0007669"/>
    <property type="project" value="UniProtKB-KW"/>
</dbReference>
<dbReference type="GO" id="GO:0003677">
    <property type="term" value="F:DNA binding"/>
    <property type="evidence" value="ECO:0007669"/>
    <property type="project" value="UniProtKB-KW"/>
</dbReference>
<dbReference type="GO" id="GO:0004677">
    <property type="term" value="F:DNA-dependent protein kinase activity"/>
    <property type="evidence" value="ECO:0007669"/>
    <property type="project" value="InterPro"/>
</dbReference>
<dbReference type="GO" id="GO:0035979">
    <property type="term" value="F:histone H2AXS139 kinase activity"/>
    <property type="evidence" value="ECO:0000250"/>
    <property type="project" value="UniProtKB"/>
</dbReference>
<dbReference type="GO" id="GO:0106310">
    <property type="term" value="F:protein serine kinase activity"/>
    <property type="evidence" value="ECO:0007669"/>
    <property type="project" value="RHEA"/>
</dbReference>
<dbReference type="GO" id="GO:0004674">
    <property type="term" value="F:protein serine/threonine kinase activity"/>
    <property type="evidence" value="ECO:0000250"/>
    <property type="project" value="UniProtKB"/>
</dbReference>
<dbReference type="GO" id="GO:0034511">
    <property type="term" value="F:U3 snoRNA binding"/>
    <property type="evidence" value="ECO:0000250"/>
    <property type="project" value="UniProtKB"/>
</dbReference>
<dbReference type="GO" id="GO:0006974">
    <property type="term" value="P:DNA damage response"/>
    <property type="evidence" value="ECO:0000250"/>
    <property type="project" value="UniProtKB"/>
</dbReference>
<dbReference type="GO" id="GO:0006302">
    <property type="term" value="P:double-strand break repair"/>
    <property type="evidence" value="ECO:0000318"/>
    <property type="project" value="GO_Central"/>
</dbReference>
<dbReference type="GO" id="GO:0006303">
    <property type="term" value="P:double-strand break repair via nonhomologous end joining"/>
    <property type="evidence" value="ECO:0007669"/>
    <property type="project" value="InterPro"/>
</dbReference>
<dbReference type="GO" id="GO:0033152">
    <property type="term" value="P:immunoglobulin V(D)J recombination"/>
    <property type="evidence" value="ECO:0000318"/>
    <property type="project" value="GO_Central"/>
</dbReference>
<dbReference type="GO" id="GO:0045087">
    <property type="term" value="P:innate immune response"/>
    <property type="evidence" value="ECO:0007669"/>
    <property type="project" value="UniProtKB-KW"/>
</dbReference>
<dbReference type="GO" id="GO:0008630">
    <property type="term" value="P:intrinsic apoptotic signaling pathway in response to DNA damage"/>
    <property type="evidence" value="ECO:0000318"/>
    <property type="project" value="GO_Central"/>
</dbReference>
<dbReference type="GO" id="GO:0000460">
    <property type="term" value="P:maturation of 5.8S rRNA"/>
    <property type="evidence" value="ECO:0000250"/>
    <property type="project" value="UniProtKB"/>
</dbReference>
<dbReference type="GO" id="GO:0031571">
    <property type="term" value="P:mitotic G1 DNA damage checkpoint signaling"/>
    <property type="evidence" value="ECO:0000250"/>
    <property type="project" value="UniProtKB"/>
</dbReference>
<dbReference type="GO" id="GO:0001933">
    <property type="term" value="P:negative regulation of protein phosphorylation"/>
    <property type="evidence" value="ECO:0000250"/>
    <property type="project" value="UniProtKB"/>
</dbReference>
<dbReference type="GO" id="GO:0018105">
    <property type="term" value="P:peptidyl-serine phosphorylation"/>
    <property type="evidence" value="ECO:0000250"/>
    <property type="project" value="UniProtKB"/>
</dbReference>
<dbReference type="GO" id="GO:0018107">
    <property type="term" value="P:peptidyl-threonine phosphorylation"/>
    <property type="evidence" value="ECO:0000250"/>
    <property type="project" value="UniProtKB"/>
</dbReference>
<dbReference type="GO" id="GO:2001034">
    <property type="term" value="P:positive regulation of double-strand break repair via nonhomologous end joining"/>
    <property type="evidence" value="ECO:0000250"/>
    <property type="project" value="UniProtKB"/>
</dbReference>
<dbReference type="GO" id="GO:0045648">
    <property type="term" value="P:positive regulation of erythrocyte differentiation"/>
    <property type="evidence" value="ECO:0000250"/>
    <property type="project" value="UniProtKB"/>
</dbReference>
<dbReference type="GO" id="GO:0045621">
    <property type="term" value="P:positive regulation of lymphocyte differentiation"/>
    <property type="evidence" value="ECO:0000250"/>
    <property type="project" value="UniProtKB"/>
</dbReference>
<dbReference type="GO" id="GO:1905221">
    <property type="term" value="P:positive regulation of platelet formation"/>
    <property type="evidence" value="ECO:0000250"/>
    <property type="project" value="UniProtKB"/>
</dbReference>
<dbReference type="GO" id="GO:0045727">
    <property type="term" value="P:positive regulation of translation"/>
    <property type="evidence" value="ECO:0000250"/>
    <property type="project" value="UniProtKB"/>
</dbReference>
<dbReference type="GO" id="GO:0006468">
    <property type="term" value="P:protein phosphorylation"/>
    <property type="evidence" value="ECO:0000250"/>
    <property type="project" value="UniProtKB"/>
</dbReference>
<dbReference type="GO" id="GO:0042752">
    <property type="term" value="P:regulation of circadian rhythm"/>
    <property type="evidence" value="ECO:0000250"/>
    <property type="project" value="UniProtKB"/>
</dbReference>
<dbReference type="GO" id="GO:1902036">
    <property type="term" value="P:regulation of hematopoietic stem cell differentiation"/>
    <property type="evidence" value="ECO:0000250"/>
    <property type="project" value="UniProtKB"/>
</dbReference>
<dbReference type="GO" id="GO:0048660">
    <property type="term" value="P:regulation of smooth muscle cell proliferation"/>
    <property type="evidence" value="ECO:0000250"/>
    <property type="project" value="UniProtKB"/>
</dbReference>
<dbReference type="GO" id="GO:0048511">
    <property type="term" value="P:rhythmic process"/>
    <property type="evidence" value="ECO:0007669"/>
    <property type="project" value="UniProtKB-KW"/>
</dbReference>
<dbReference type="GO" id="GO:0034462">
    <property type="term" value="P:small-subunit processome assembly"/>
    <property type="evidence" value="ECO:0000250"/>
    <property type="project" value="UniProtKB"/>
</dbReference>
<dbReference type="GO" id="GO:0000723">
    <property type="term" value="P:telomere maintenance"/>
    <property type="evidence" value="ECO:0000318"/>
    <property type="project" value="GO_Central"/>
</dbReference>
<dbReference type="CDD" id="cd05172">
    <property type="entry name" value="PIKKc_DNA-PK"/>
    <property type="match status" value="1"/>
</dbReference>
<dbReference type="FunFam" id="1.10.1070.11:FF:000018">
    <property type="entry name" value="DNA-dependent protein kinase catalytic subunit"/>
    <property type="match status" value="1"/>
</dbReference>
<dbReference type="FunFam" id="3.30.1010.10:FF:000013">
    <property type="entry name" value="Protein kinase, DNA-activated, catalytic subunit"/>
    <property type="match status" value="1"/>
</dbReference>
<dbReference type="Gene3D" id="1.10.1070.11">
    <property type="entry name" value="Phosphatidylinositol 3-/4-kinase, catalytic domain"/>
    <property type="match status" value="1"/>
</dbReference>
<dbReference type="Gene3D" id="3.30.1010.10">
    <property type="entry name" value="Phosphatidylinositol 3-kinase Catalytic Subunit, Chain A, domain 4"/>
    <property type="match status" value="1"/>
</dbReference>
<dbReference type="InterPro" id="IPR016024">
    <property type="entry name" value="ARM-type_fold"/>
</dbReference>
<dbReference type="InterPro" id="IPR050517">
    <property type="entry name" value="DDR_Repair_Kinase"/>
</dbReference>
<dbReference type="InterPro" id="IPR037706">
    <property type="entry name" value="DNA-PK_dom"/>
</dbReference>
<dbReference type="InterPro" id="IPR046804">
    <property type="entry name" value="DNA-PKcs_N"/>
</dbReference>
<dbReference type="InterPro" id="IPR046803">
    <property type="entry name" value="DNAPKcs_CC1-2"/>
</dbReference>
<dbReference type="InterPro" id="IPR012582">
    <property type="entry name" value="DNAPKcs_CC3"/>
</dbReference>
<dbReference type="InterPro" id="IPR045581">
    <property type="entry name" value="DNAPKcs_CC5"/>
</dbReference>
<dbReference type="InterPro" id="IPR003152">
    <property type="entry name" value="FATC_dom"/>
</dbReference>
<dbReference type="InterPro" id="IPR011009">
    <property type="entry name" value="Kinase-like_dom_sf"/>
</dbReference>
<dbReference type="InterPro" id="IPR000403">
    <property type="entry name" value="PI3/4_kinase_cat_dom"/>
</dbReference>
<dbReference type="InterPro" id="IPR036940">
    <property type="entry name" value="PI3/4_kinase_cat_sf"/>
</dbReference>
<dbReference type="InterPro" id="IPR018936">
    <property type="entry name" value="PI3/4_kinase_CS"/>
</dbReference>
<dbReference type="InterPro" id="IPR003151">
    <property type="entry name" value="PIK-rel_kinase_FAT"/>
</dbReference>
<dbReference type="InterPro" id="IPR014009">
    <property type="entry name" value="PIK_FAT"/>
</dbReference>
<dbReference type="PANTHER" id="PTHR11139">
    <property type="entry name" value="ATAXIA TELANGIECTASIA MUTATED ATM -RELATED"/>
    <property type="match status" value="1"/>
</dbReference>
<dbReference type="PANTHER" id="PTHR11139:SF68">
    <property type="entry name" value="DNA-DEPENDENT PROTEIN KINASE CATALYTIC SUBUNIT"/>
    <property type="match status" value="1"/>
</dbReference>
<dbReference type="Pfam" id="PF20500">
    <property type="entry name" value="DNA-PKcs_N"/>
    <property type="match status" value="1"/>
</dbReference>
<dbReference type="Pfam" id="PF20502">
    <property type="entry name" value="DNAPKcs_CC1-2"/>
    <property type="match status" value="1"/>
</dbReference>
<dbReference type="Pfam" id="PF08163">
    <property type="entry name" value="DNAPKcs_CC3"/>
    <property type="match status" value="1"/>
</dbReference>
<dbReference type="Pfam" id="PF19704">
    <property type="entry name" value="DNAPKcs_CC5"/>
    <property type="match status" value="1"/>
</dbReference>
<dbReference type="Pfam" id="PF02259">
    <property type="entry name" value="FAT"/>
    <property type="match status" value="1"/>
</dbReference>
<dbReference type="Pfam" id="PF02260">
    <property type="entry name" value="FATC"/>
    <property type="match status" value="1"/>
</dbReference>
<dbReference type="Pfam" id="PF00454">
    <property type="entry name" value="PI3_PI4_kinase"/>
    <property type="match status" value="1"/>
</dbReference>
<dbReference type="SMART" id="SM01343">
    <property type="entry name" value="FATC"/>
    <property type="match status" value="1"/>
</dbReference>
<dbReference type="SMART" id="SM01344">
    <property type="entry name" value="NUC194"/>
    <property type="match status" value="1"/>
</dbReference>
<dbReference type="SMART" id="SM00146">
    <property type="entry name" value="PI3Kc"/>
    <property type="match status" value="1"/>
</dbReference>
<dbReference type="SUPFAM" id="SSF48371">
    <property type="entry name" value="ARM repeat"/>
    <property type="match status" value="2"/>
</dbReference>
<dbReference type="SUPFAM" id="SSF56112">
    <property type="entry name" value="Protein kinase-like (PK-like)"/>
    <property type="match status" value="1"/>
</dbReference>
<dbReference type="PROSITE" id="PS51189">
    <property type="entry name" value="FAT"/>
    <property type="match status" value="1"/>
</dbReference>
<dbReference type="PROSITE" id="PS51190">
    <property type="entry name" value="FATC"/>
    <property type="match status" value="1"/>
</dbReference>
<dbReference type="PROSITE" id="PS00915">
    <property type="entry name" value="PI3_4_KINASE_1"/>
    <property type="match status" value="1"/>
</dbReference>
<dbReference type="PROSITE" id="PS00916">
    <property type="entry name" value="PI3_4_KINASE_2"/>
    <property type="match status" value="1"/>
</dbReference>
<dbReference type="PROSITE" id="PS50290">
    <property type="entry name" value="PI3_4_KINASE_3"/>
    <property type="match status" value="1"/>
</dbReference>
<reference key="1">
    <citation type="journal article" date="2002" name="Gene">
        <title>DNA-PKcs mutations in dogs and horses: allele frequency and association with neoplasia.</title>
        <authorList>
            <person name="Ding Q."/>
            <person name="Bramble L."/>
            <person name="Yuzbasiyan-Gurkan V."/>
            <person name="Bell T."/>
            <person name="Meek K."/>
        </authorList>
    </citation>
    <scope>NUCLEOTIDE SEQUENCE [MRNA]</scope>
    <scope>INVOLVEMENT IN SCID</scope>
    <source>
        <strain>Jack Russel terrier</strain>
    </source>
</reference>
<evidence type="ECO:0000250" key="1">
    <source>
        <dbReference type="UniProtKB" id="P78527"/>
    </source>
</evidence>
<evidence type="ECO:0000250" key="2">
    <source>
        <dbReference type="UniProtKB" id="P97313"/>
    </source>
</evidence>
<evidence type="ECO:0000255" key="3">
    <source>
        <dbReference type="PROSITE-ProRule" id="PRU00269"/>
    </source>
</evidence>
<evidence type="ECO:0000255" key="4">
    <source>
        <dbReference type="PROSITE-ProRule" id="PRU00534"/>
    </source>
</evidence>
<evidence type="ECO:0000255" key="5">
    <source>
        <dbReference type="PROSITE-ProRule" id="PRU00535"/>
    </source>
</evidence>
<evidence type="ECO:0000256" key="6">
    <source>
        <dbReference type="SAM" id="MobiDB-lite"/>
    </source>
</evidence>
<evidence type="ECO:0000269" key="7">
    <source>
    </source>
</evidence>
<evidence type="ECO:0000305" key="8"/>
<organism>
    <name type="scientific">Canis lupus familiaris</name>
    <name type="common">Dog</name>
    <name type="synonym">Canis familiaris</name>
    <dbReference type="NCBI Taxonomy" id="9615"/>
    <lineage>
        <taxon>Eukaryota</taxon>
        <taxon>Metazoa</taxon>
        <taxon>Chordata</taxon>
        <taxon>Craniata</taxon>
        <taxon>Vertebrata</taxon>
        <taxon>Euteleostomi</taxon>
        <taxon>Mammalia</taxon>
        <taxon>Eutheria</taxon>
        <taxon>Laurasiatheria</taxon>
        <taxon>Carnivora</taxon>
        <taxon>Caniformia</taxon>
        <taxon>Canidae</taxon>
        <taxon>Canis</taxon>
    </lineage>
</organism>
<proteinExistence type="evidence at transcript level"/>